<protein>
    <recommendedName>
        <fullName>Insulin 2</fullName>
    </recommendedName>
    <component>
        <recommendedName>
            <fullName>Insulin B chain</fullName>
        </recommendedName>
    </component>
    <component>
        <recommendedName>
            <fullName>Insulin A chain</fullName>
        </recommendedName>
    </component>
</protein>
<dbReference type="PIR" id="A01605">
    <property type="entry name" value="INTO2"/>
</dbReference>
<dbReference type="SMR" id="P01338"/>
<dbReference type="GO" id="GO:0005615">
    <property type="term" value="C:extracellular space"/>
    <property type="evidence" value="ECO:0007669"/>
    <property type="project" value="TreeGrafter"/>
</dbReference>
<dbReference type="GO" id="GO:0005179">
    <property type="term" value="F:hormone activity"/>
    <property type="evidence" value="ECO:0007669"/>
    <property type="project" value="UniProtKB-KW"/>
</dbReference>
<dbReference type="GO" id="GO:0006006">
    <property type="term" value="P:glucose metabolic process"/>
    <property type="evidence" value="ECO:0007669"/>
    <property type="project" value="UniProtKB-KW"/>
</dbReference>
<dbReference type="CDD" id="cd04367">
    <property type="entry name" value="IlGF_insulin_like"/>
    <property type="match status" value="1"/>
</dbReference>
<dbReference type="Gene3D" id="1.10.100.10">
    <property type="entry name" value="Insulin-like"/>
    <property type="match status" value="2"/>
</dbReference>
<dbReference type="InterPro" id="IPR004825">
    <property type="entry name" value="Insulin"/>
</dbReference>
<dbReference type="InterPro" id="IPR016179">
    <property type="entry name" value="Insulin-like"/>
</dbReference>
<dbReference type="InterPro" id="IPR036438">
    <property type="entry name" value="Insulin-like_sf"/>
</dbReference>
<dbReference type="InterPro" id="IPR022353">
    <property type="entry name" value="Insulin_CS"/>
</dbReference>
<dbReference type="InterPro" id="IPR022352">
    <property type="entry name" value="Insulin_family"/>
</dbReference>
<dbReference type="PANTHER" id="PTHR11454:SF9">
    <property type="entry name" value="INSULIN"/>
    <property type="match status" value="1"/>
</dbReference>
<dbReference type="PANTHER" id="PTHR11454">
    <property type="entry name" value="INSULIN/INSULIN GROWTH FACTOR"/>
    <property type="match status" value="1"/>
</dbReference>
<dbReference type="Pfam" id="PF00049">
    <property type="entry name" value="Insulin"/>
    <property type="match status" value="2"/>
</dbReference>
<dbReference type="PRINTS" id="PR00277">
    <property type="entry name" value="INSULIN"/>
</dbReference>
<dbReference type="PRINTS" id="PR00276">
    <property type="entry name" value="INSULINFAMLY"/>
</dbReference>
<dbReference type="SMART" id="SM00078">
    <property type="entry name" value="IlGF"/>
    <property type="match status" value="1"/>
</dbReference>
<dbReference type="SUPFAM" id="SSF56994">
    <property type="entry name" value="Insulin-like"/>
    <property type="match status" value="1"/>
</dbReference>
<dbReference type="PROSITE" id="PS00262">
    <property type="entry name" value="INSULIN"/>
    <property type="match status" value="1"/>
</dbReference>
<name>INS2_BATSP</name>
<sequence>MAPPQHLCGSHLVDALYLVCGDRGFFYNSGIVEQCCHRPCDKFDLQSYCN</sequence>
<reference key="1">
    <citation type="journal article" date="1966" name="Am. J. Med.">
        <title>Species variation in the amino acid sequence of insulin.</title>
        <authorList>
            <person name="Smith L.F."/>
        </authorList>
    </citation>
    <scope>PROTEIN SEQUENCE</scope>
</reference>
<gene>
    <name type="primary">ins2</name>
</gene>
<feature type="peptide" id="PRO_0000015762" description="Insulin B chain">
    <location>
        <begin position="1"/>
        <end position="29"/>
    </location>
</feature>
<feature type="peptide" id="PRO_0000015763" description="Insulin A chain">
    <location>
        <begin position="30"/>
        <end position="50"/>
    </location>
</feature>
<feature type="disulfide bond" description="Interchain (between B and A chains)">
    <location>
        <begin position="8"/>
        <end position="36"/>
    </location>
</feature>
<feature type="disulfide bond" description="Interchain (between B and A chains)">
    <location>
        <begin position="20"/>
        <end position="49"/>
    </location>
</feature>
<feature type="disulfide bond">
    <location>
        <begin position="35"/>
        <end position="40"/>
    </location>
</feature>
<feature type="non-consecutive residues" evidence="1">
    <location>
        <begin position="29"/>
        <end position="30"/>
    </location>
</feature>
<organism>
    <name type="scientific">Batrachoididae sp.</name>
    <name type="common">Toadfish</name>
    <dbReference type="NCBI Taxonomy" id="8066"/>
    <lineage>
        <taxon>Eukaryota</taxon>
        <taxon>Metazoa</taxon>
        <taxon>Chordata</taxon>
        <taxon>Craniata</taxon>
        <taxon>Vertebrata</taxon>
        <taxon>Euteleostomi</taxon>
        <taxon>Actinopterygii</taxon>
        <taxon>Neopterygii</taxon>
        <taxon>Teleostei</taxon>
        <taxon>Neoteleostei</taxon>
        <taxon>Acanthomorphata</taxon>
        <taxon>Batrachoidaria</taxon>
        <taxon>Batrachoididae</taxon>
    </lineage>
</organism>
<proteinExistence type="evidence at protein level"/>
<comment type="function">
    <text>Insulin decreases blood glucose concentration. It increases cell permeability to monosaccharides, amino acids and fatty acids. It accelerates glycolysis, the pentose phosphate cycle, and glycogen synthesis in liver.</text>
</comment>
<comment type="subunit">
    <text>Heterodimer of a B chain and an A chain linked by two disulfide bonds.</text>
</comment>
<comment type="subcellular location">
    <subcellularLocation>
        <location>Secreted</location>
    </subcellularLocation>
</comment>
<comment type="similarity">
    <text evidence="1">Belongs to the insulin family.</text>
</comment>
<accession>P01338</accession>
<keyword id="KW-0119">Carbohydrate metabolism</keyword>
<keyword id="KW-0903">Direct protein sequencing</keyword>
<keyword id="KW-1015">Disulfide bond</keyword>
<keyword id="KW-0313">Glucose metabolism</keyword>
<keyword id="KW-0372">Hormone</keyword>
<keyword id="KW-0964">Secreted</keyword>
<evidence type="ECO:0000305" key="1"/>